<reference key="1">
    <citation type="journal article" date="2005" name="Proc. Natl. Acad. Sci. U.S.A.">
        <title>The psychrophilic lifestyle as revealed by the genome sequence of Colwellia psychrerythraea 34H through genomic and proteomic analyses.</title>
        <authorList>
            <person name="Methe B.A."/>
            <person name="Nelson K.E."/>
            <person name="Deming J.W."/>
            <person name="Momen B."/>
            <person name="Melamud E."/>
            <person name="Zhang X."/>
            <person name="Moult J."/>
            <person name="Madupu R."/>
            <person name="Nelson W.C."/>
            <person name="Dodson R.J."/>
            <person name="Brinkac L.M."/>
            <person name="Daugherty S.C."/>
            <person name="Durkin A.S."/>
            <person name="DeBoy R.T."/>
            <person name="Kolonay J.F."/>
            <person name="Sullivan S.A."/>
            <person name="Zhou L."/>
            <person name="Davidsen T.M."/>
            <person name="Wu M."/>
            <person name="Huston A.L."/>
            <person name="Lewis M."/>
            <person name="Weaver B."/>
            <person name="Weidman J.F."/>
            <person name="Khouri H."/>
            <person name="Utterback T.R."/>
            <person name="Feldblyum T.V."/>
            <person name="Fraser C.M."/>
        </authorList>
    </citation>
    <scope>NUCLEOTIDE SEQUENCE [LARGE SCALE GENOMIC DNA]</scope>
    <source>
        <strain>34H / ATCC BAA-681</strain>
    </source>
</reference>
<name>FMT_COLP3</name>
<keyword id="KW-0648">Protein biosynthesis</keyword>
<keyword id="KW-0808">Transferase</keyword>
<evidence type="ECO:0000255" key="1">
    <source>
        <dbReference type="HAMAP-Rule" id="MF_00182"/>
    </source>
</evidence>
<feature type="chain" id="PRO_1000058399" description="Methionyl-tRNA formyltransferase">
    <location>
        <begin position="1"/>
        <end position="327"/>
    </location>
</feature>
<feature type="binding site" evidence="1">
    <location>
        <begin position="113"/>
        <end position="116"/>
    </location>
    <ligand>
        <name>(6S)-5,6,7,8-tetrahydrofolate</name>
        <dbReference type="ChEBI" id="CHEBI:57453"/>
    </ligand>
</feature>
<organism>
    <name type="scientific">Colwellia psychrerythraea (strain 34H / ATCC BAA-681)</name>
    <name type="common">Vibrio psychroerythus</name>
    <dbReference type="NCBI Taxonomy" id="167879"/>
    <lineage>
        <taxon>Bacteria</taxon>
        <taxon>Pseudomonadati</taxon>
        <taxon>Pseudomonadota</taxon>
        <taxon>Gammaproteobacteria</taxon>
        <taxon>Alteromonadales</taxon>
        <taxon>Colwelliaceae</taxon>
        <taxon>Colwellia</taxon>
    </lineage>
</organism>
<proteinExistence type="inferred from homology"/>
<protein>
    <recommendedName>
        <fullName evidence="1">Methionyl-tRNA formyltransferase</fullName>
        <ecNumber evidence="1">2.1.2.9</ecNumber>
    </recommendedName>
</protein>
<dbReference type="EC" id="2.1.2.9" evidence="1"/>
<dbReference type="EMBL" id="CP000083">
    <property type="protein sequence ID" value="AAZ25053.1"/>
    <property type="molecule type" value="Genomic_DNA"/>
</dbReference>
<dbReference type="RefSeq" id="WP_011040909.1">
    <property type="nucleotide sequence ID" value="NC_003910.7"/>
</dbReference>
<dbReference type="SMR" id="Q48AS9"/>
<dbReference type="STRING" id="167879.CPS_0019"/>
<dbReference type="KEGG" id="cps:CPS_0019"/>
<dbReference type="HOGENOM" id="CLU_033347_1_2_6"/>
<dbReference type="Proteomes" id="UP000000547">
    <property type="component" value="Chromosome"/>
</dbReference>
<dbReference type="GO" id="GO:0005829">
    <property type="term" value="C:cytosol"/>
    <property type="evidence" value="ECO:0007669"/>
    <property type="project" value="TreeGrafter"/>
</dbReference>
<dbReference type="GO" id="GO:0004479">
    <property type="term" value="F:methionyl-tRNA formyltransferase activity"/>
    <property type="evidence" value="ECO:0007669"/>
    <property type="project" value="UniProtKB-UniRule"/>
</dbReference>
<dbReference type="CDD" id="cd08646">
    <property type="entry name" value="FMT_core_Met-tRNA-FMT_N"/>
    <property type="match status" value="1"/>
</dbReference>
<dbReference type="CDD" id="cd08704">
    <property type="entry name" value="Met_tRNA_FMT_C"/>
    <property type="match status" value="1"/>
</dbReference>
<dbReference type="FunFam" id="3.40.50.170:FF:000003">
    <property type="entry name" value="Methionyl-tRNA formyltransferase"/>
    <property type="match status" value="1"/>
</dbReference>
<dbReference type="Gene3D" id="3.10.25.10">
    <property type="entry name" value="Formyl transferase, C-terminal domain"/>
    <property type="match status" value="1"/>
</dbReference>
<dbReference type="Gene3D" id="3.40.50.170">
    <property type="entry name" value="Formyl transferase, N-terminal domain"/>
    <property type="match status" value="1"/>
</dbReference>
<dbReference type="HAMAP" id="MF_00182">
    <property type="entry name" value="Formyl_trans"/>
    <property type="match status" value="1"/>
</dbReference>
<dbReference type="InterPro" id="IPR005794">
    <property type="entry name" value="Fmt"/>
</dbReference>
<dbReference type="InterPro" id="IPR005793">
    <property type="entry name" value="Formyl_trans_C"/>
</dbReference>
<dbReference type="InterPro" id="IPR037022">
    <property type="entry name" value="Formyl_trans_C_sf"/>
</dbReference>
<dbReference type="InterPro" id="IPR002376">
    <property type="entry name" value="Formyl_transf_N"/>
</dbReference>
<dbReference type="InterPro" id="IPR036477">
    <property type="entry name" value="Formyl_transf_N_sf"/>
</dbReference>
<dbReference type="InterPro" id="IPR011034">
    <property type="entry name" value="Formyl_transferase-like_C_sf"/>
</dbReference>
<dbReference type="InterPro" id="IPR001555">
    <property type="entry name" value="GART_AS"/>
</dbReference>
<dbReference type="InterPro" id="IPR044135">
    <property type="entry name" value="Met-tRNA-FMT_C"/>
</dbReference>
<dbReference type="InterPro" id="IPR041711">
    <property type="entry name" value="Met-tRNA-FMT_N"/>
</dbReference>
<dbReference type="NCBIfam" id="TIGR00460">
    <property type="entry name" value="fmt"/>
    <property type="match status" value="1"/>
</dbReference>
<dbReference type="PANTHER" id="PTHR11138">
    <property type="entry name" value="METHIONYL-TRNA FORMYLTRANSFERASE"/>
    <property type="match status" value="1"/>
</dbReference>
<dbReference type="PANTHER" id="PTHR11138:SF5">
    <property type="entry name" value="METHIONYL-TRNA FORMYLTRANSFERASE, MITOCHONDRIAL"/>
    <property type="match status" value="1"/>
</dbReference>
<dbReference type="Pfam" id="PF02911">
    <property type="entry name" value="Formyl_trans_C"/>
    <property type="match status" value="1"/>
</dbReference>
<dbReference type="Pfam" id="PF00551">
    <property type="entry name" value="Formyl_trans_N"/>
    <property type="match status" value="1"/>
</dbReference>
<dbReference type="SUPFAM" id="SSF50486">
    <property type="entry name" value="FMT C-terminal domain-like"/>
    <property type="match status" value="1"/>
</dbReference>
<dbReference type="SUPFAM" id="SSF53328">
    <property type="entry name" value="Formyltransferase"/>
    <property type="match status" value="1"/>
</dbReference>
<dbReference type="PROSITE" id="PS00373">
    <property type="entry name" value="GART"/>
    <property type="match status" value="1"/>
</dbReference>
<gene>
    <name evidence="1" type="primary">fmt</name>
    <name type="ordered locus">CPS_0019</name>
</gene>
<sequence length="327" mass="35914">MVTPLNIIFAGTPEFAAQHLAALINSEHNIVAVYCPPDKPAGRGKKLTACATKLLAIEHDIIVEQPINFKNEEDQQQLAKYNADIMVVVAYGLLLPEVILNSPRLGCINVHGSILPKWRGAAPIQRSLEAGDKKTGVTIMQMDKGLDTGDMILSAECEIENTDTSASLYEKLANLGPTALVNTLTIMAEPDYQASNHNIAQDDELATYAKKLDKTEAELNWQFSADELHRKIRAYIPWPVAQFTFTESEGKQHRLRIWQASVQEYRGNADPGTIIKADKEGIEVATTSGSLRLEVIQLPGKKALAVKDILNGRSDWFVVGSTINKLG</sequence>
<comment type="function">
    <text evidence="1">Attaches a formyl group to the free amino group of methionyl-tRNA(fMet). The formyl group appears to play a dual role in the initiator identity of N-formylmethionyl-tRNA by promoting its recognition by IF2 and preventing the misappropriation of this tRNA by the elongation apparatus.</text>
</comment>
<comment type="catalytic activity">
    <reaction evidence="1">
        <text>L-methionyl-tRNA(fMet) + (6R)-10-formyltetrahydrofolate = N-formyl-L-methionyl-tRNA(fMet) + (6S)-5,6,7,8-tetrahydrofolate + H(+)</text>
        <dbReference type="Rhea" id="RHEA:24380"/>
        <dbReference type="Rhea" id="RHEA-COMP:9952"/>
        <dbReference type="Rhea" id="RHEA-COMP:9953"/>
        <dbReference type="ChEBI" id="CHEBI:15378"/>
        <dbReference type="ChEBI" id="CHEBI:57453"/>
        <dbReference type="ChEBI" id="CHEBI:78530"/>
        <dbReference type="ChEBI" id="CHEBI:78844"/>
        <dbReference type="ChEBI" id="CHEBI:195366"/>
        <dbReference type="EC" id="2.1.2.9"/>
    </reaction>
</comment>
<comment type="similarity">
    <text evidence="1">Belongs to the Fmt family.</text>
</comment>
<accession>Q48AS9</accession>